<reference key="1">
    <citation type="journal article" date="2005" name="Proc. Natl. Acad. Sci. U.S.A.">
        <title>The psychrophilic lifestyle as revealed by the genome sequence of Colwellia psychrerythraea 34H through genomic and proteomic analyses.</title>
        <authorList>
            <person name="Methe B.A."/>
            <person name="Nelson K.E."/>
            <person name="Deming J.W."/>
            <person name="Momen B."/>
            <person name="Melamud E."/>
            <person name="Zhang X."/>
            <person name="Moult J."/>
            <person name="Madupu R."/>
            <person name="Nelson W.C."/>
            <person name="Dodson R.J."/>
            <person name="Brinkac L.M."/>
            <person name="Daugherty S.C."/>
            <person name="Durkin A.S."/>
            <person name="DeBoy R.T."/>
            <person name="Kolonay J.F."/>
            <person name="Sullivan S.A."/>
            <person name="Zhou L."/>
            <person name="Davidsen T.M."/>
            <person name="Wu M."/>
            <person name="Huston A.L."/>
            <person name="Lewis M."/>
            <person name="Weaver B."/>
            <person name="Weidman J.F."/>
            <person name="Khouri H."/>
            <person name="Utterback T.R."/>
            <person name="Feldblyum T.V."/>
            <person name="Fraser C.M."/>
        </authorList>
    </citation>
    <scope>NUCLEOTIDE SEQUENCE [LARGE SCALE GENOMIC DNA]</scope>
    <source>
        <strain>34H / ATCC BAA-681</strain>
    </source>
</reference>
<gene>
    <name evidence="1" type="primary">rpoC</name>
    <name type="ordered locus">CPS_4768</name>
</gene>
<keyword id="KW-0240">DNA-directed RNA polymerase</keyword>
<keyword id="KW-0460">Magnesium</keyword>
<keyword id="KW-0479">Metal-binding</keyword>
<keyword id="KW-0548">Nucleotidyltransferase</keyword>
<keyword id="KW-0804">Transcription</keyword>
<keyword id="KW-0808">Transferase</keyword>
<keyword id="KW-0862">Zinc</keyword>
<name>RPOC_COLP3</name>
<proteinExistence type="inferred from homology"/>
<dbReference type="EC" id="2.7.7.6" evidence="1"/>
<dbReference type="EMBL" id="CP000083">
    <property type="protein sequence ID" value="AAZ25655.1"/>
    <property type="molecule type" value="Genomic_DNA"/>
</dbReference>
<dbReference type="RefSeq" id="WP_011045493.1">
    <property type="nucleotide sequence ID" value="NC_003910.7"/>
</dbReference>
<dbReference type="SMR" id="Q47UW0"/>
<dbReference type="STRING" id="167879.CPS_4768"/>
<dbReference type="KEGG" id="cps:CPS_4768"/>
<dbReference type="eggNOG" id="COG0086">
    <property type="taxonomic scope" value="Bacteria"/>
</dbReference>
<dbReference type="HOGENOM" id="CLU_000524_3_1_6"/>
<dbReference type="Proteomes" id="UP000000547">
    <property type="component" value="Chromosome"/>
</dbReference>
<dbReference type="GO" id="GO:0000428">
    <property type="term" value="C:DNA-directed RNA polymerase complex"/>
    <property type="evidence" value="ECO:0007669"/>
    <property type="project" value="UniProtKB-KW"/>
</dbReference>
<dbReference type="GO" id="GO:0003677">
    <property type="term" value="F:DNA binding"/>
    <property type="evidence" value="ECO:0007669"/>
    <property type="project" value="UniProtKB-UniRule"/>
</dbReference>
<dbReference type="GO" id="GO:0003899">
    <property type="term" value="F:DNA-directed RNA polymerase activity"/>
    <property type="evidence" value="ECO:0007669"/>
    <property type="project" value="UniProtKB-UniRule"/>
</dbReference>
<dbReference type="GO" id="GO:0000287">
    <property type="term" value="F:magnesium ion binding"/>
    <property type="evidence" value="ECO:0007669"/>
    <property type="project" value="UniProtKB-UniRule"/>
</dbReference>
<dbReference type="GO" id="GO:0008270">
    <property type="term" value="F:zinc ion binding"/>
    <property type="evidence" value="ECO:0007669"/>
    <property type="project" value="UniProtKB-UniRule"/>
</dbReference>
<dbReference type="GO" id="GO:0006351">
    <property type="term" value="P:DNA-templated transcription"/>
    <property type="evidence" value="ECO:0007669"/>
    <property type="project" value="UniProtKB-UniRule"/>
</dbReference>
<dbReference type="CDD" id="cd02655">
    <property type="entry name" value="RNAP_beta'_C"/>
    <property type="match status" value="1"/>
</dbReference>
<dbReference type="CDD" id="cd01609">
    <property type="entry name" value="RNAP_beta'_N"/>
    <property type="match status" value="1"/>
</dbReference>
<dbReference type="FunFam" id="1.10.132.30:FF:000003">
    <property type="entry name" value="DNA-directed RNA polymerase subunit beta"/>
    <property type="match status" value="1"/>
</dbReference>
<dbReference type="FunFam" id="1.10.150.390:FF:000002">
    <property type="entry name" value="DNA-directed RNA polymerase subunit beta"/>
    <property type="match status" value="1"/>
</dbReference>
<dbReference type="FunFam" id="1.10.40.90:FF:000001">
    <property type="entry name" value="DNA-directed RNA polymerase subunit beta"/>
    <property type="match status" value="1"/>
</dbReference>
<dbReference type="FunFam" id="4.10.860.120:FF:000001">
    <property type="entry name" value="DNA-directed RNA polymerase subunit beta"/>
    <property type="match status" value="1"/>
</dbReference>
<dbReference type="Gene3D" id="1.10.132.30">
    <property type="match status" value="1"/>
</dbReference>
<dbReference type="Gene3D" id="1.10.150.390">
    <property type="match status" value="1"/>
</dbReference>
<dbReference type="Gene3D" id="1.10.1790.20">
    <property type="match status" value="1"/>
</dbReference>
<dbReference type="Gene3D" id="1.10.40.90">
    <property type="match status" value="1"/>
</dbReference>
<dbReference type="Gene3D" id="2.40.40.20">
    <property type="match status" value="1"/>
</dbReference>
<dbReference type="Gene3D" id="2.40.50.100">
    <property type="match status" value="3"/>
</dbReference>
<dbReference type="Gene3D" id="4.10.860.120">
    <property type="entry name" value="RNA polymerase II, clamp domain"/>
    <property type="match status" value="1"/>
</dbReference>
<dbReference type="Gene3D" id="1.10.274.100">
    <property type="entry name" value="RNA polymerase Rpb1, domain 3"/>
    <property type="match status" value="1"/>
</dbReference>
<dbReference type="HAMAP" id="MF_01322">
    <property type="entry name" value="RNApol_bact_RpoC"/>
    <property type="match status" value="1"/>
</dbReference>
<dbReference type="InterPro" id="IPR045867">
    <property type="entry name" value="DNA-dir_RpoC_beta_prime"/>
</dbReference>
<dbReference type="InterPro" id="IPR012754">
    <property type="entry name" value="DNA-dir_RpoC_beta_prime_bact"/>
</dbReference>
<dbReference type="InterPro" id="IPR000722">
    <property type="entry name" value="RNA_pol_asu"/>
</dbReference>
<dbReference type="InterPro" id="IPR006592">
    <property type="entry name" value="RNA_pol_N"/>
</dbReference>
<dbReference type="InterPro" id="IPR007080">
    <property type="entry name" value="RNA_pol_Rpb1_1"/>
</dbReference>
<dbReference type="InterPro" id="IPR007066">
    <property type="entry name" value="RNA_pol_Rpb1_3"/>
</dbReference>
<dbReference type="InterPro" id="IPR042102">
    <property type="entry name" value="RNA_pol_Rpb1_3_sf"/>
</dbReference>
<dbReference type="InterPro" id="IPR007083">
    <property type="entry name" value="RNA_pol_Rpb1_4"/>
</dbReference>
<dbReference type="InterPro" id="IPR007081">
    <property type="entry name" value="RNA_pol_Rpb1_5"/>
</dbReference>
<dbReference type="InterPro" id="IPR044893">
    <property type="entry name" value="RNA_pol_Rpb1_clamp_domain"/>
</dbReference>
<dbReference type="InterPro" id="IPR038120">
    <property type="entry name" value="Rpb1_funnel_sf"/>
</dbReference>
<dbReference type="NCBIfam" id="TIGR02386">
    <property type="entry name" value="rpoC_TIGR"/>
    <property type="match status" value="1"/>
</dbReference>
<dbReference type="PANTHER" id="PTHR19376">
    <property type="entry name" value="DNA-DIRECTED RNA POLYMERASE"/>
    <property type="match status" value="1"/>
</dbReference>
<dbReference type="PANTHER" id="PTHR19376:SF54">
    <property type="entry name" value="DNA-DIRECTED RNA POLYMERASE SUBUNIT BETA"/>
    <property type="match status" value="1"/>
</dbReference>
<dbReference type="Pfam" id="PF04997">
    <property type="entry name" value="RNA_pol_Rpb1_1"/>
    <property type="match status" value="1"/>
</dbReference>
<dbReference type="Pfam" id="PF00623">
    <property type="entry name" value="RNA_pol_Rpb1_2"/>
    <property type="match status" value="2"/>
</dbReference>
<dbReference type="Pfam" id="PF04983">
    <property type="entry name" value="RNA_pol_Rpb1_3"/>
    <property type="match status" value="1"/>
</dbReference>
<dbReference type="Pfam" id="PF05000">
    <property type="entry name" value="RNA_pol_Rpb1_4"/>
    <property type="match status" value="1"/>
</dbReference>
<dbReference type="Pfam" id="PF04998">
    <property type="entry name" value="RNA_pol_Rpb1_5"/>
    <property type="match status" value="1"/>
</dbReference>
<dbReference type="SMART" id="SM00663">
    <property type="entry name" value="RPOLA_N"/>
    <property type="match status" value="1"/>
</dbReference>
<dbReference type="SUPFAM" id="SSF64484">
    <property type="entry name" value="beta and beta-prime subunits of DNA dependent RNA-polymerase"/>
    <property type="match status" value="1"/>
</dbReference>
<feature type="chain" id="PRO_0000225526" description="DNA-directed RNA polymerase subunit beta'">
    <location>
        <begin position="1"/>
        <end position="1406"/>
    </location>
</feature>
<feature type="binding site" evidence="1">
    <location>
        <position position="70"/>
    </location>
    <ligand>
        <name>Zn(2+)</name>
        <dbReference type="ChEBI" id="CHEBI:29105"/>
        <label>1</label>
    </ligand>
</feature>
<feature type="binding site" evidence="1">
    <location>
        <position position="72"/>
    </location>
    <ligand>
        <name>Zn(2+)</name>
        <dbReference type="ChEBI" id="CHEBI:29105"/>
        <label>1</label>
    </ligand>
</feature>
<feature type="binding site" evidence="1">
    <location>
        <position position="85"/>
    </location>
    <ligand>
        <name>Zn(2+)</name>
        <dbReference type="ChEBI" id="CHEBI:29105"/>
        <label>1</label>
    </ligand>
</feature>
<feature type="binding site" evidence="1">
    <location>
        <position position="88"/>
    </location>
    <ligand>
        <name>Zn(2+)</name>
        <dbReference type="ChEBI" id="CHEBI:29105"/>
        <label>1</label>
    </ligand>
</feature>
<feature type="binding site" evidence="1">
    <location>
        <position position="460"/>
    </location>
    <ligand>
        <name>Mg(2+)</name>
        <dbReference type="ChEBI" id="CHEBI:18420"/>
    </ligand>
</feature>
<feature type="binding site" evidence="1">
    <location>
        <position position="462"/>
    </location>
    <ligand>
        <name>Mg(2+)</name>
        <dbReference type="ChEBI" id="CHEBI:18420"/>
    </ligand>
</feature>
<feature type="binding site" evidence="1">
    <location>
        <position position="464"/>
    </location>
    <ligand>
        <name>Mg(2+)</name>
        <dbReference type="ChEBI" id="CHEBI:18420"/>
    </ligand>
</feature>
<feature type="binding site" evidence="1">
    <location>
        <position position="814"/>
    </location>
    <ligand>
        <name>Zn(2+)</name>
        <dbReference type="ChEBI" id="CHEBI:29105"/>
        <label>2</label>
    </ligand>
</feature>
<feature type="binding site" evidence="1">
    <location>
        <position position="888"/>
    </location>
    <ligand>
        <name>Zn(2+)</name>
        <dbReference type="ChEBI" id="CHEBI:29105"/>
        <label>2</label>
    </ligand>
</feature>
<feature type="binding site" evidence="1">
    <location>
        <position position="895"/>
    </location>
    <ligand>
        <name>Zn(2+)</name>
        <dbReference type="ChEBI" id="CHEBI:29105"/>
        <label>2</label>
    </ligand>
</feature>
<feature type="binding site" evidence="1">
    <location>
        <position position="898"/>
    </location>
    <ligand>
        <name>Zn(2+)</name>
        <dbReference type="ChEBI" id="CHEBI:29105"/>
        <label>2</label>
    </ligand>
</feature>
<sequence length="1406" mass="155320">MKDLLKFLKQQNQTEDFDGIRIGLASPDLVRSWSFGEVKKPETINYRTFKPERDGLFCARIFGPVKDYECLCGKYKRLKHRGVICEKCGVEVTLTKVRRDRMGHIELASPVAHIWFLKSLPSRIGLLLDMTLRDIERVLYFESYVVTEPGMTTLEKSQILTEEEYLDALEEHGDEFDALMGAEAVLALLQQIDLDGEVAQMREELPEIGSETKRKKITKRLKLMEAFAASGNKPEWMIMNVLPILPPDLRPLVPLDGGRFATSDLNDLYRRVINRNNRLKRLLDLVAPDIIVRNEKRMLQESVDALLDNGRRGRAITGSNKRPLKSLADMIKGKQGRFRQNLLGKRVDYSGRSVITVGPTLKLHQCGLPKKMALELFKPFIYGKLEARGLATTIKAAKKLVEREGAEVWDVLDEVIREHPVMLNRAPTLHRLGIQAFEPVLIEGKAIHLHPLVCAAYNADFDGDQMAVHVPLTIEAQMEARTLMMSTNNVLAPANGEPIIVPSQDVVLGLYYLTRFRINGLGEGMYFTDEKEVEKAYRTGVAELHARIKVRITEHVKNADGEWEPVTKLRDTTVGRAIMWQVCPKGLPYDLIDKPLGKKPISKLINHAYRNLGLKETVMFADQIMYTGFHYAMIAGCSVGIDDMVIPEAKYTIVEDSEAEVAEIQAQFDQGLVTAGEKYNKVIDIWSSANEKVSKAMMDNLSKEMVMNRDGEMEEQDSFNSIFMMADSGARGSAAQIRQLAGMRGLMAKPDGSIIETPIKANFREGLTVLQYFISTHGARKGLADTALKTANSGYLTRRLVDVAQDLVVTNHDCGTHDGLLMTPLIEGGDVVEPLRERVLGRVVCDDVLIPGTDEVLLPRNTLIDEALCDVIEDNSVDQIKVRSIITCKTDFGICANCYGRDLARGHMINQGEAIGVVAAQSIGEPGTQLTMRTFHIGGAASRATAESSVQVKNTGTLKLQNAKFVTNSEKHLVITSRSSELTIIDEMGREKERYKVPYGSVLSKNDGEAVNSGDTIANWDPHTHPIITEVAGKVQFVDLADGVTMVRQTDELTGLSSIVITDAAQRNATGKEMRPALKLVDAKGKEVMIAGTEIPALYYLPGNAIVNLEDGADVGVGDALARIPQASSKTRDITGGLPRVADLFEARKPKLPAILAEKTGVVAFGKETKGKVRLLITQPSGEVYEEMIPKTRLLNIYEGEPVIKGEVIADGPESPHDILRLRGVAPVANYIVNEVQEVYRLQGVKINDKHIEVIVRQMIRKCEILDAGDSTFLKGEQVEVARVNISNRELEAEGKQPAEYEMQMMGITKASLATESFISAASFQETTRVLTEAAVAGKKDGLRGLKENVIVGRLIPAGTGYSYHQERARRKAAALAPAVESTVSADDAEKALTDALNSDLLSGNH</sequence>
<organism>
    <name type="scientific">Colwellia psychrerythraea (strain 34H / ATCC BAA-681)</name>
    <name type="common">Vibrio psychroerythus</name>
    <dbReference type="NCBI Taxonomy" id="167879"/>
    <lineage>
        <taxon>Bacteria</taxon>
        <taxon>Pseudomonadati</taxon>
        <taxon>Pseudomonadota</taxon>
        <taxon>Gammaproteobacteria</taxon>
        <taxon>Alteromonadales</taxon>
        <taxon>Colwelliaceae</taxon>
        <taxon>Colwellia</taxon>
    </lineage>
</organism>
<evidence type="ECO:0000255" key="1">
    <source>
        <dbReference type="HAMAP-Rule" id="MF_01322"/>
    </source>
</evidence>
<comment type="function">
    <text evidence="1">DNA-dependent RNA polymerase catalyzes the transcription of DNA into RNA using the four ribonucleoside triphosphates as substrates.</text>
</comment>
<comment type="catalytic activity">
    <reaction evidence="1">
        <text>RNA(n) + a ribonucleoside 5'-triphosphate = RNA(n+1) + diphosphate</text>
        <dbReference type="Rhea" id="RHEA:21248"/>
        <dbReference type="Rhea" id="RHEA-COMP:14527"/>
        <dbReference type="Rhea" id="RHEA-COMP:17342"/>
        <dbReference type="ChEBI" id="CHEBI:33019"/>
        <dbReference type="ChEBI" id="CHEBI:61557"/>
        <dbReference type="ChEBI" id="CHEBI:140395"/>
        <dbReference type="EC" id="2.7.7.6"/>
    </reaction>
</comment>
<comment type="cofactor">
    <cofactor evidence="1">
        <name>Mg(2+)</name>
        <dbReference type="ChEBI" id="CHEBI:18420"/>
    </cofactor>
    <text evidence="1">Binds 1 Mg(2+) ion per subunit.</text>
</comment>
<comment type="cofactor">
    <cofactor evidence="1">
        <name>Zn(2+)</name>
        <dbReference type="ChEBI" id="CHEBI:29105"/>
    </cofactor>
    <text evidence="1">Binds 2 Zn(2+) ions per subunit.</text>
</comment>
<comment type="subunit">
    <text evidence="1">The RNAP catalytic core consists of 2 alpha, 1 beta, 1 beta' and 1 omega subunit. When a sigma factor is associated with the core the holoenzyme is formed, which can initiate transcription.</text>
</comment>
<comment type="similarity">
    <text evidence="1">Belongs to the RNA polymerase beta' chain family.</text>
</comment>
<protein>
    <recommendedName>
        <fullName evidence="1">DNA-directed RNA polymerase subunit beta'</fullName>
        <shortName evidence="1">RNAP subunit beta'</shortName>
        <ecNumber evidence="1">2.7.7.6</ecNumber>
    </recommendedName>
    <alternativeName>
        <fullName evidence="1">RNA polymerase subunit beta'</fullName>
    </alternativeName>
    <alternativeName>
        <fullName evidence="1">Transcriptase subunit beta'</fullName>
    </alternativeName>
</protein>
<accession>Q47UW0</accession>